<proteinExistence type="inferred from homology"/>
<comment type="function">
    <text evidence="1">Produces ATP from ADP in the presence of a proton gradient across the membrane.</text>
</comment>
<comment type="subunit">
    <text>F-type ATPases have 2 components, CF(1) - the catalytic core - and CF(0) - the membrane proton channel. CF(1) has five subunits: alpha(3), beta(3), gamma(1), delta(1), epsilon(1). CF(0) has three main subunits: a, b and c.</text>
</comment>
<comment type="subcellular location">
    <subcellularLocation>
        <location evidence="1">Cell membrane</location>
        <topology evidence="1">Peripheral membrane protein</topology>
    </subcellularLocation>
</comment>
<comment type="similarity">
    <text evidence="2">Belongs to the ATPase epsilon chain family.</text>
</comment>
<sequence>MAEMTVQIVTPDGLKYDHHAKFILVKTPNGELGVLANHENLIAPLEVHEMKIKRIDDDSHVDWVAVNGGIIEIKDNLVTIVADSAERERDIDLSRAERAKKRAEKAIEEAKEQHRIDEVQRAQVALRRALNRINVGSK</sequence>
<keyword id="KW-0066">ATP synthesis</keyword>
<keyword id="KW-1003">Cell membrane</keyword>
<keyword id="KW-0139">CF(1)</keyword>
<keyword id="KW-0375">Hydrogen ion transport</keyword>
<keyword id="KW-0406">Ion transport</keyword>
<keyword id="KW-0472">Membrane</keyword>
<keyword id="KW-1185">Reference proteome</keyword>
<keyword id="KW-0813">Transport</keyword>
<reference key="1">
    <citation type="journal article" date="1996" name="Gene">
        <title>Cloning and nucleotide sequence analysis of the Streptococcus mutans membrane-bound, proton-translocating ATPase operon.</title>
        <authorList>
            <person name="Smith A.J."/>
            <person name="Quivey R.G."/>
            <person name="Faustoferri R.C."/>
        </authorList>
    </citation>
    <scope>NUCLEOTIDE SEQUENCE [GENOMIC DNA]</scope>
    <source>
        <strain>GS-5</strain>
    </source>
</reference>
<reference key="2">
    <citation type="journal article" date="2002" name="Proc. Natl. Acad. Sci. U.S.A.">
        <title>Genome sequence of Streptococcus mutans UA159, a cariogenic dental pathogen.</title>
        <authorList>
            <person name="Ajdic D.J."/>
            <person name="McShan W.M."/>
            <person name="McLaughlin R.E."/>
            <person name="Savic G."/>
            <person name="Chang J."/>
            <person name="Carson M.B."/>
            <person name="Primeaux C."/>
            <person name="Tian R."/>
            <person name="Kenton S."/>
            <person name="Jia H.G."/>
            <person name="Lin S.P."/>
            <person name="Qian Y."/>
            <person name="Li S."/>
            <person name="Zhu H."/>
            <person name="Najar F.Z."/>
            <person name="Lai H."/>
            <person name="White J."/>
            <person name="Roe B.A."/>
            <person name="Ferretti J.J."/>
        </authorList>
    </citation>
    <scope>NUCLEOTIDE SEQUENCE [LARGE SCALE GENOMIC DNA]</scope>
    <source>
        <strain>ATCC 700610 / UA159</strain>
    </source>
</reference>
<dbReference type="EMBL" id="U31170">
    <property type="protein sequence ID" value="AAD13384.1"/>
    <property type="molecule type" value="Genomic_DNA"/>
</dbReference>
<dbReference type="EMBL" id="AE014133">
    <property type="protein sequence ID" value="AAN59177.1"/>
    <property type="molecule type" value="Genomic_DNA"/>
</dbReference>
<dbReference type="PIR" id="JC5742">
    <property type="entry name" value="JC5742"/>
</dbReference>
<dbReference type="RefSeq" id="NP_721871.1">
    <property type="nucleotide sequence ID" value="NC_004350.2"/>
</dbReference>
<dbReference type="RefSeq" id="WP_002262939.1">
    <property type="nucleotide sequence ID" value="NC_004350.2"/>
</dbReference>
<dbReference type="SMR" id="P95790"/>
<dbReference type="STRING" id="210007.SMU_1527"/>
<dbReference type="KEGG" id="smu:SMU_1527"/>
<dbReference type="PATRIC" id="fig|210007.7.peg.1359"/>
<dbReference type="eggNOG" id="COG0355">
    <property type="taxonomic scope" value="Bacteria"/>
</dbReference>
<dbReference type="HOGENOM" id="CLU_084338_1_0_9"/>
<dbReference type="OrthoDB" id="9804110at2"/>
<dbReference type="PhylomeDB" id="P95790"/>
<dbReference type="SABIO-RK" id="P95790"/>
<dbReference type="Proteomes" id="UP000002512">
    <property type="component" value="Chromosome"/>
</dbReference>
<dbReference type="GO" id="GO:0005886">
    <property type="term" value="C:plasma membrane"/>
    <property type="evidence" value="ECO:0007669"/>
    <property type="project" value="UniProtKB-SubCell"/>
</dbReference>
<dbReference type="GO" id="GO:0045259">
    <property type="term" value="C:proton-transporting ATP synthase complex"/>
    <property type="evidence" value="ECO:0007669"/>
    <property type="project" value="UniProtKB-KW"/>
</dbReference>
<dbReference type="GO" id="GO:0005524">
    <property type="term" value="F:ATP binding"/>
    <property type="evidence" value="ECO:0007669"/>
    <property type="project" value="UniProtKB-UniRule"/>
</dbReference>
<dbReference type="GO" id="GO:0046933">
    <property type="term" value="F:proton-transporting ATP synthase activity, rotational mechanism"/>
    <property type="evidence" value="ECO:0007669"/>
    <property type="project" value="UniProtKB-UniRule"/>
</dbReference>
<dbReference type="CDD" id="cd12152">
    <property type="entry name" value="F1-ATPase_delta"/>
    <property type="match status" value="1"/>
</dbReference>
<dbReference type="Gene3D" id="1.20.5.440">
    <property type="entry name" value="ATP synthase delta/epsilon subunit, C-terminal domain"/>
    <property type="match status" value="1"/>
</dbReference>
<dbReference type="Gene3D" id="2.60.15.10">
    <property type="entry name" value="F0F1 ATP synthase delta/epsilon subunit, N-terminal"/>
    <property type="match status" value="1"/>
</dbReference>
<dbReference type="HAMAP" id="MF_00530">
    <property type="entry name" value="ATP_synth_epsil_bac"/>
    <property type="match status" value="1"/>
</dbReference>
<dbReference type="InterPro" id="IPR036794">
    <property type="entry name" value="ATP_F1_dsu/esu_C_sf"/>
</dbReference>
<dbReference type="InterPro" id="IPR001469">
    <property type="entry name" value="ATP_synth_F1_dsu/esu"/>
</dbReference>
<dbReference type="InterPro" id="IPR020546">
    <property type="entry name" value="ATP_synth_F1_dsu/esu_N"/>
</dbReference>
<dbReference type="InterPro" id="IPR020547">
    <property type="entry name" value="ATP_synth_F1_esu_C"/>
</dbReference>
<dbReference type="InterPro" id="IPR036771">
    <property type="entry name" value="ATPsynth_dsu/esu_N"/>
</dbReference>
<dbReference type="NCBIfam" id="TIGR01216">
    <property type="entry name" value="ATP_synt_epsi"/>
    <property type="match status" value="1"/>
</dbReference>
<dbReference type="NCBIfam" id="NF001846">
    <property type="entry name" value="PRK00571.1-3"/>
    <property type="match status" value="1"/>
</dbReference>
<dbReference type="PANTHER" id="PTHR13822">
    <property type="entry name" value="ATP SYNTHASE DELTA/EPSILON CHAIN"/>
    <property type="match status" value="1"/>
</dbReference>
<dbReference type="PANTHER" id="PTHR13822:SF10">
    <property type="entry name" value="ATP SYNTHASE EPSILON CHAIN, CHLOROPLASTIC"/>
    <property type="match status" value="1"/>
</dbReference>
<dbReference type="Pfam" id="PF00401">
    <property type="entry name" value="ATP-synt_DE"/>
    <property type="match status" value="1"/>
</dbReference>
<dbReference type="Pfam" id="PF02823">
    <property type="entry name" value="ATP-synt_DE_N"/>
    <property type="match status" value="1"/>
</dbReference>
<dbReference type="SUPFAM" id="SSF46604">
    <property type="entry name" value="Epsilon subunit of F1F0-ATP synthase C-terminal domain"/>
    <property type="match status" value="1"/>
</dbReference>
<dbReference type="SUPFAM" id="SSF51344">
    <property type="entry name" value="Epsilon subunit of F1F0-ATP synthase N-terminal domain"/>
    <property type="match status" value="1"/>
</dbReference>
<protein>
    <recommendedName>
        <fullName>ATP synthase epsilon chain</fullName>
    </recommendedName>
    <alternativeName>
        <fullName>ATP synthase F1 sector epsilon subunit</fullName>
    </alternativeName>
    <alternativeName>
        <fullName>F-ATPase epsilon subunit</fullName>
    </alternativeName>
</protein>
<name>ATPE_STRMU</name>
<organism>
    <name type="scientific">Streptococcus mutans serotype c (strain ATCC 700610 / UA159)</name>
    <dbReference type="NCBI Taxonomy" id="210007"/>
    <lineage>
        <taxon>Bacteria</taxon>
        <taxon>Bacillati</taxon>
        <taxon>Bacillota</taxon>
        <taxon>Bacilli</taxon>
        <taxon>Lactobacillales</taxon>
        <taxon>Streptococcaceae</taxon>
        <taxon>Streptococcus</taxon>
    </lineage>
</organism>
<gene>
    <name type="primary">atpC</name>
    <name type="ordered locus">SMU_1527</name>
</gene>
<feature type="chain" id="PRO_0000188216" description="ATP synthase epsilon chain">
    <location>
        <begin position="1"/>
        <end position="138"/>
    </location>
</feature>
<evidence type="ECO:0000250" key="1"/>
<evidence type="ECO:0000305" key="2"/>
<accession>P95790</accession>